<name>SBDS_XENLA</name>
<evidence type="ECO:0000250" key="1"/>
<evidence type="ECO:0000305" key="2"/>
<feature type="initiator methionine" description="Removed" evidence="1">
    <location>
        <position position="1"/>
    </location>
</feature>
<feature type="chain" id="PRO_0000304735" description="Ribosome maturation protein SBDS">
    <location>
        <begin position="2"/>
        <end position="250"/>
    </location>
</feature>
<feature type="modified residue" description="N-acetylserine" evidence="1">
    <location>
        <position position="2"/>
    </location>
</feature>
<protein>
    <recommendedName>
        <fullName>Ribosome maturation protein SBDS</fullName>
    </recommendedName>
    <alternativeName>
        <fullName>Shwachman-Bodian-Diamond syndrome protein homolog</fullName>
    </alternativeName>
</protein>
<reference key="1">
    <citation type="submission" date="2007-05" db="EMBL/GenBank/DDBJ databases">
        <authorList>
            <consortium name="NIH - Xenopus Gene Collection (XGC) project"/>
        </authorList>
    </citation>
    <scope>NUCLEOTIDE SEQUENCE [LARGE SCALE MRNA]</scope>
    <source>
        <tissue>Testis</tissue>
    </source>
</reference>
<accession>A5D8M6</accession>
<keyword id="KW-0007">Acetylation</keyword>
<keyword id="KW-0963">Cytoplasm</keyword>
<keyword id="KW-0206">Cytoskeleton</keyword>
<keyword id="KW-0539">Nucleus</keyword>
<keyword id="KW-1185">Reference proteome</keyword>
<keyword id="KW-0690">Ribosome biogenesis</keyword>
<gene>
    <name type="primary">sbds</name>
</gene>
<organism>
    <name type="scientific">Xenopus laevis</name>
    <name type="common">African clawed frog</name>
    <dbReference type="NCBI Taxonomy" id="8355"/>
    <lineage>
        <taxon>Eukaryota</taxon>
        <taxon>Metazoa</taxon>
        <taxon>Chordata</taxon>
        <taxon>Craniata</taxon>
        <taxon>Vertebrata</taxon>
        <taxon>Euteleostomi</taxon>
        <taxon>Amphibia</taxon>
        <taxon>Batrachia</taxon>
        <taxon>Anura</taxon>
        <taxon>Pipoidea</taxon>
        <taxon>Pipidae</taxon>
        <taxon>Xenopodinae</taxon>
        <taxon>Xenopus</taxon>
        <taxon>Xenopus</taxon>
    </lineage>
</organism>
<proteinExistence type="evidence at transcript level"/>
<sequence>MSIFTPTNQIRLTNVAVVRMKKGGKRFEIACYKNKVMSWRSGAEKDLDEVLQTHSVFMNVSKGQGAKKEDLLKAFGTEDQTEICKQILSKGELQVSEKERSTQLEQMFRDIATIVADKCVNPETKRPYTVNLIERAMKDIHYSVKATKSTKQQALDVIKQLKETMQIERAHMRLRFIVPAKDGKKLKEKLKPLIKHIESENFDQELEIVCLIDPGCFREIDELIRCETKGKGTLEVLSLKDVEEGDEKFE</sequence>
<dbReference type="EMBL" id="BC141736">
    <property type="protein sequence ID" value="AAI41737.1"/>
    <property type="molecule type" value="mRNA"/>
</dbReference>
<dbReference type="RefSeq" id="NP_001092159.1">
    <property type="nucleotide sequence ID" value="NM_001098689.1"/>
</dbReference>
<dbReference type="SMR" id="A5D8M6"/>
<dbReference type="DNASU" id="100049749"/>
<dbReference type="GeneID" id="100049749"/>
<dbReference type="KEGG" id="xla:100049749"/>
<dbReference type="AGR" id="Xenbase:XB-GENE-1003512"/>
<dbReference type="CTD" id="100049749"/>
<dbReference type="Xenbase" id="XB-GENE-1003512">
    <property type="gene designation" value="sbds.S"/>
</dbReference>
<dbReference type="OrthoDB" id="10253092at2759"/>
<dbReference type="Proteomes" id="UP000186698">
    <property type="component" value="Chromosome 2S"/>
</dbReference>
<dbReference type="Bgee" id="100049749">
    <property type="expression patterns" value="Expressed in testis and 19 other cell types or tissues"/>
</dbReference>
<dbReference type="GO" id="GO:0005737">
    <property type="term" value="C:cytoplasm"/>
    <property type="evidence" value="ECO:0007669"/>
    <property type="project" value="UniProtKB-SubCell"/>
</dbReference>
<dbReference type="GO" id="GO:0005730">
    <property type="term" value="C:nucleolus"/>
    <property type="evidence" value="ECO:0007669"/>
    <property type="project" value="UniProtKB-SubCell"/>
</dbReference>
<dbReference type="GO" id="GO:0005654">
    <property type="term" value="C:nucleoplasm"/>
    <property type="evidence" value="ECO:0007669"/>
    <property type="project" value="UniProtKB-SubCell"/>
</dbReference>
<dbReference type="GO" id="GO:0000922">
    <property type="term" value="C:spindle pole"/>
    <property type="evidence" value="ECO:0000250"/>
    <property type="project" value="UniProtKB"/>
</dbReference>
<dbReference type="GO" id="GO:0043022">
    <property type="term" value="F:ribosome binding"/>
    <property type="evidence" value="ECO:0000250"/>
    <property type="project" value="UniProtKB"/>
</dbReference>
<dbReference type="GO" id="GO:0042256">
    <property type="term" value="P:cytosolic ribosome assembly"/>
    <property type="evidence" value="ECO:0000250"/>
    <property type="project" value="UniProtKB"/>
</dbReference>
<dbReference type="GO" id="GO:0002244">
    <property type="term" value="P:hematopoietic progenitor cell differentiation"/>
    <property type="evidence" value="ECO:0000250"/>
    <property type="project" value="UniProtKB"/>
</dbReference>
<dbReference type="FunFam" id="3.30.70.240:FF:000009">
    <property type="entry name" value="SBDS ribosome maturation factor"/>
    <property type="match status" value="1"/>
</dbReference>
<dbReference type="FunFam" id="1.10.10.900:FF:000001">
    <property type="entry name" value="SBDS, ribosome maturation factor"/>
    <property type="match status" value="1"/>
</dbReference>
<dbReference type="FunFam" id="3.30.1250.10:FF:000001">
    <property type="entry name" value="SBDS, ribosome maturation factor"/>
    <property type="match status" value="1"/>
</dbReference>
<dbReference type="Gene3D" id="3.30.70.240">
    <property type="match status" value="1"/>
</dbReference>
<dbReference type="Gene3D" id="3.30.1250.10">
    <property type="entry name" value="Ribosome maturation protein SBDS, N-terminal domain"/>
    <property type="match status" value="1"/>
</dbReference>
<dbReference type="Gene3D" id="1.10.10.900">
    <property type="entry name" value="SBDS protein C-terminal domain, subdomain 1"/>
    <property type="match status" value="1"/>
</dbReference>
<dbReference type="InterPro" id="IPR018023">
    <property type="entry name" value="Ribosome_mat_SBDS_CS"/>
</dbReference>
<dbReference type="InterPro" id="IPR036786">
    <property type="entry name" value="Ribosome_mat_SBDS_N_sf"/>
</dbReference>
<dbReference type="InterPro" id="IPR002140">
    <property type="entry name" value="Sdo1/SBDS"/>
</dbReference>
<dbReference type="InterPro" id="IPR039100">
    <property type="entry name" value="Sdo1/SBDS-like"/>
</dbReference>
<dbReference type="InterPro" id="IPR046928">
    <property type="entry name" value="SDO1/SBDS_C"/>
</dbReference>
<dbReference type="InterPro" id="IPR018978">
    <property type="entry name" value="SDO1/SBDS_central"/>
</dbReference>
<dbReference type="InterPro" id="IPR037188">
    <property type="entry name" value="Sdo1/SBDS_central_sf"/>
</dbReference>
<dbReference type="InterPro" id="IPR019783">
    <property type="entry name" value="SDO1/SBDS_N"/>
</dbReference>
<dbReference type="NCBIfam" id="TIGR00291">
    <property type="entry name" value="RNA_SBDS"/>
    <property type="match status" value="1"/>
</dbReference>
<dbReference type="PANTHER" id="PTHR10927">
    <property type="entry name" value="RIBOSOME MATURATION PROTEIN SBDS"/>
    <property type="match status" value="1"/>
</dbReference>
<dbReference type="PANTHER" id="PTHR10927:SF1">
    <property type="entry name" value="RIBOSOME MATURATION PROTEIN SBDS"/>
    <property type="match status" value="1"/>
</dbReference>
<dbReference type="Pfam" id="PF20268">
    <property type="entry name" value="SBDS_C"/>
    <property type="match status" value="1"/>
</dbReference>
<dbReference type="Pfam" id="PF09377">
    <property type="entry name" value="SBDS_domain_II"/>
    <property type="match status" value="1"/>
</dbReference>
<dbReference type="Pfam" id="PF01172">
    <property type="entry name" value="SBDS_N"/>
    <property type="match status" value="1"/>
</dbReference>
<dbReference type="SUPFAM" id="SSF89895">
    <property type="entry name" value="FYSH domain"/>
    <property type="match status" value="1"/>
</dbReference>
<dbReference type="SUPFAM" id="SSF109728">
    <property type="entry name" value="Hypothetical protein AF0491, middle domain"/>
    <property type="match status" value="1"/>
</dbReference>
<dbReference type="PROSITE" id="PS01267">
    <property type="entry name" value="UPF0023"/>
    <property type="match status" value="1"/>
</dbReference>
<comment type="function">
    <text evidence="1">Required for the assembly of mature ribosomes and ribosome biogenesis. Together with EFL1, triggers the GTP-dependent release of eif6 from 60S pre-ribosomes in the cytoplasm, thereby activating ribosomes for translation competence by allowing 80S ribosome assembly and facilitating eif6 recycling to the nucleus, where it is required for 60S rRNA processing and nuclear export. Required for normal levels of protein synthesis. May play a role in cellular stress resistance. May play a role in cellular response to DNA damage. May play a role in cell proliferation (By similarity).</text>
</comment>
<comment type="subunit">
    <text evidence="1">Associates with the 60S ribosomal subunit.</text>
</comment>
<comment type="subcellular location">
    <subcellularLocation>
        <location evidence="1">Cytoplasm</location>
    </subcellularLocation>
    <subcellularLocation>
        <location evidence="1">Nucleus</location>
        <location evidence="1">Nucleolus</location>
    </subcellularLocation>
    <subcellularLocation>
        <location evidence="1">Nucleus</location>
        <location evidence="1">Nucleoplasm</location>
    </subcellularLocation>
    <subcellularLocation>
        <location evidence="1">Cytoplasm</location>
        <location evidence="1">Cytoskeleton</location>
        <location evidence="1">Spindle</location>
    </subcellularLocation>
    <text evidence="1">Primarily detected in the cytoplasm, and at low levels in nucleus and nucleolus. Detected at the mitotic spindle. Colocalizes with the microtubule organizing center during interphase (By similarity).</text>
</comment>
<comment type="similarity">
    <text evidence="2">Belongs to the SDO1/SBDS family.</text>
</comment>